<comment type="function">
    <text evidence="8 9 10">Inhibitor of HGFAC (PubMed:9045658). Inhibits serine protease activity of ST14/matriptase in vitro (PubMed:28710277). Inhibits serine protease activity of TMPRSS13, via the BPTI/Kunitz inhibitor 1 domain (PubMed:20977675).</text>
</comment>
<comment type="subunit">
    <text evidence="7 9">Interacts with HGFAC (PubMed:15713485). Interacts with TMPRSS13; the interaction promotes the phosphorylation and cell membrane localization of TMPRSS13 (PubMed:28710277).</text>
</comment>
<comment type="interaction">
    <interactant intactId="EBI-953990">
        <id>O43278</id>
    </interactant>
    <interactant intactId="EBI-1041722">
        <id>Q04756</id>
        <label>HGFAC</label>
    </interactant>
    <organismsDiffer>false</organismsDiffer>
    <experiments>2</experiments>
</comment>
<comment type="interaction">
    <interactant intactId="EBI-12078338">
        <id>O43278-2</id>
    </interactant>
    <interactant intactId="EBI-10225815">
        <id>Q08AM2</id>
        <label>ADAM33</label>
    </interactant>
    <organismsDiffer>false</organismsDiffer>
    <experiments>3</experiments>
</comment>
<comment type="interaction">
    <interactant intactId="EBI-12078338">
        <id>O43278-2</id>
    </interactant>
    <interactant intactId="EBI-3925742">
        <id>Q8TD06</id>
        <label>AGR3</label>
    </interactant>
    <organismsDiffer>false</organismsDiffer>
    <experiments>3</experiments>
</comment>
<comment type="interaction">
    <interactant intactId="EBI-12078338">
        <id>O43278-2</id>
    </interactant>
    <interactant intactId="EBI-12820543">
        <id>O75508</id>
        <label>CLDN11</label>
    </interactant>
    <organismsDiffer>false</organismsDiffer>
    <experiments>3</experiments>
</comment>
<comment type="interaction">
    <interactant intactId="EBI-12078338">
        <id>O43278-2</id>
    </interactant>
    <interactant intactId="EBI-11989440">
        <id>Q9BXN2-6</id>
        <label>CLEC7A</label>
    </interactant>
    <organismsDiffer>false</organismsDiffer>
    <experiments>3</experiments>
</comment>
<comment type="interaction">
    <interactant intactId="EBI-12078338">
        <id>O43278-2</id>
    </interactant>
    <interactant intactId="EBI-2876774">
        <id>Q92520</id>
        <label>FAM3C</label>
    </interactant>
    <organismsDiffer>false</organismsDiffer>
    <experiments>3</experiments>
</comment>
<comment type="interaction">
    <interactant intactId="EBI-12078338">
        <id>O43278-2</id>
    </interactant>
    <interactant intactId="EBI-11749135">
        <id>Q8IUG1</id>
        <label>KRTAP1-3</label>
    </interactant>
    <organismsDiffer>false</organismsDiffer>
    <experiments>3</experiments>
</comment>
<comment type="interaction">
    <interactant intactId="EBI-12078338">
        <id>O43278-2</id>
    </interactant>
    <interactant intactId="EBI-3932027">
        <id>P21145</id>
        <label>MAL</label>
    </interactant>
    <organismsDiffer>false</organismsDiffer>
    <experiments>3</experiments>
</comment>
<comment type="interaction">
    <interactant intactId="EBI-12078338">
        <id>O43278-2</id>
    </interactant>
    <interactant intactId="EBI-10314552">
        <id>Q9NVC3</id>
        <label>SLC38A7</label>
    </interactant>
    <organismsDiffer>false</organismsDiffer>
    <experiments>3</experiments>
</comment>
<comment type="interaction">
    <interactant intactId="EBI-12078338">
        <id>O43278-2</id>
    </interactant>
    <interactant intactId="EBI-8640191">
        <id>Q9NRQ5</id>
        <label>SMCO4</label>
    </interactant>
    <organismsDiffer>false</organismsDiffer>
    <experiments>3</experiments>
</comment>
<comment type="interaction">
    <interactant intactId="EBI-12078338">
        <id>O43278-2</id>
    </interactant>
    <interactant intactId="EBI-714319">
        <id>P02787</id>
        <label>TF</label>
    </interactant>
    <organismsDiffer>false</organismsDiffer>
    <experiments>3</experiments>
</comment>
<comment type="interaction">
    <interactant intactId="EBI-12078338">
        <id>O43278-2</id>
    </interactant>
    <interactant intactId="EBI-1057733">
        <id>Q9BVC6</id>
        <label>TMEM109</label>
    </interactant>
    <organismsDiffer>false</organismsDiffer>
    <experiments>3</experiments>
</comment>
<comment type="interaction">
    <interactant intactId="EBI-12078338">
        <id>O43278-2</id>
    </interactant>
    <interactant intactId="EBI-10278423">
        <id>Q8WZ59</id>
        <label>TMEM190</label>
    </interactant>
    <organismsDiffer>false</organismsDiffer>
    <experiments>3</experiments>
</comment>
<comment type="interaction">
    <interactant intactId="EBI-12078338">
        <id>O43278-2</id>
    </interactant>
    <interactant intactId="EBI-12111910">
        <id>Q5BJF2</id>
        <label>TMEM97</label>
    </interactant>
    <organismsDiffer>false</organismsDiffer>
    <experiments>3</experiments>
</comment>
<comment type="interaction">
    <interactant intactId="EBI-12078338">
        <id>O43278-2</id>
    </interactant>
    <interactant intactId="EBI-12045841">
        <id>Q86UF1</id>
        <label>TSPAN33</label>
    </interactant>
    <organismsDiffer>false</organismsDiffer>
    <experiments>3</experiments>
</comment>
<comment type="interaction">
    <interactant intactId="EBI-12078338">
        <id>O43278-2</id>
    </interactant>
    <interactant intactId="EBI-947187">
        <id>Q9UHD9</id>
        <label>UBQLN2</label>
    </interactant>
    <organismsDiffer>false</organismsDiffer>
    <experiments>3</experiments>
</comment>
<comment type="interaction">
    <interactant intactId="EBI-12078338">
        <id>O43278-2</id>
    </interactant>
    <interactant intactId="EBI-12237619">
        <id>O75841</id>
        <label>UPK1B</label>
    </interactant>
    <organismsDiffer>false</organismsDiffer>
    <experiments>3</experiments>
</comment>
<comment type="interaction">
    <interactant intactId="EBI-12078338">
        <id>O43278-2</id>
    </interactant>
    <interactant intactId="EBI-10191195">
        <id>O95183</id>
        <label>VAMP5</label>
    </interactant>
    <organismsDiffer>false</organismsDiffer>
    <experiments>3</experiments>
</comment>
<comment type="subcellular location">
    <subcellularLocation>
        <location evidence="10">Secreted</location>
    </subcellularLocation>
    <subcellularLocation>
        <location evidence="9">Cytoplasm</location>
    </subcellularLocation>
    <subcellularLocation>
        <location evidence="9">Cell membrane</location>
    </subcellularLocation>
</comment>
<comment type="alternative products">
    <event type="alternative splicing"/>
    <isoform>
        <id>O43278-1</id>
        <name>1</name>
        <name>HAI-1B</name>
        <sequence type="displayed"/>
    </isoform>
    <isoform>
        <id>O43278-2</id>
        <name>2</name>
        <name>HAI-1A</name>
        <sequence type="described" ref="VSP_013019"/>
    </isoform>
</comment>
<comment type="domain">
    <text>This inhibitor contains two inhibitory domains.</text>
</comment>
<comment type="online information" name="Atlas of Genetics and Cytogenetics in Oncology and Haematology">
    <link uri="https://atlasgeneticsoncology.org/gene/44384/SPINT1"/>
</comment>
<proteinExistence type="evidence at protein level"/>
<sequence length="529" mass="58398">MAPARTMARARLAPAGIPAVALWLLCTLGLQGTQAGPPPAPPGLPAGADCLNSFTAGVPGFVLDTNASVSNGATFLESPTVRRGWDCVRACCTTQNCNLALVELQPDRGEDAIAACFLINCLYEQNFVCKFAPREGFINYLTREVYRSYRQLRTQGFGGSGIPKAWAGIDLKVQPQEPLVLKDVENTDWRLLRGDTDVRVERKDPNQVELWGLKEGTYLFQLTVTSSDHPEDTANVTVTVLSTKQTEDYCLASNKVGRCRGSFPRWYYDPTEQICKSFVYGGCLGNKNNYLREEECILACRGVQGGPLRGSSGAQATFPQGPSMERRHPVCSGTCQPTQFRCSNGCCIDSFLECDDTPNCPDASDEAACEKYTSGFDELQRIHFPSDKGHCVDLPDTGLCKESIPRWYYNPFSEHCARFTYGGCYGNKNNFEEEQQCLESCRGISKKDVFGLRREIPIPSTGSVEMAVAVFLVICIVVVVAILGYCFFKNQRKDFHGHHHHPPPTPASSTVSTTEDTEHLVYNHTTRPL</sequence>
<dbReference type="EMBL" id="AB000095">
    <property type="protein sequence ID" value="BAA25014.1"/>
    <property type="molecule type" value="mRNA"/>
</dbReference>
<dbReference type="EMBL" id="AY296715">
    <property type="protein sequence ID" value="AAP44001.1"/>
    <property type="molecule type" value="mRNA"/>
</dbReference>
<dbReference type="EMBL" id="AY358969">
    <property type="protein sequence ID" value="AAQ89328.1"/>
    <property type="molecule type" value="mRNA"/>
</dbReference>
<dbReference type="EMBL" id="BT007425">
    <property type="protein sequence ID" value="AAP36093.1"/>
    <property type="molecule type" value="mRNA"/>
</dbReference>
<dbReference type="EMBL" id="BC004140">
    <property type="protein sequence ID" value="AAH04140.1"/>
    <property type="molecule type" value="mRNA"/>
</dbReference>
<dbReference type="EMBL" id="BC018702">
    <property type="protein sequence ID" value="AAH18702.1"/>
    <property type="molecule type" value="mRNA"/>
</dbReference>
<dbReference type="CCDS" id="CCDS10067.1">
    <molecule id="O43278-1"/>
</dbReference>
<dbReference type="CCDS" id="CCDS45231.1">
    <molecule id="O43278-2"/>
</dbReference>
<dbReference type="RefSeq" id="NP_001027539.1">
    <molecule id="O43278-2"/>
    <property type="nucleotide sequence ID" value="NM_001032367.2"/>
</dbReference>
<dbReference type="RefSeq" id="NP_001373802.1">
    <molecule id="O43278-1"/>
    <property type="nucleotide sequence ID" value="NM_001386873.1"/>
</dbReference>
<dbReference type="RefSeq" id="NP_003701.1">
    <molecule id="O43278-2"/>
    <property type="nucleotide sequence ID" value="NM_003710.4"/>
</dbReference>
<dbReference type="RefSeq" id="NP_857593.1">
    <molecule id="O43278-1"/>
    <property type="nucleotide sequence ID" value="NM_181642.3"/>
</dbReference>
<dbReference type="RefSeq" id="XP_006720720.1">
    <property type="nucleotide sequence ID" value="XM_006720657.1"/>
</dbReference>
<dbReference type="RefSeq" id="XP_047288924.1">
    <molecule id="O43278-2"/>
    <property type="nucleotide sequence ID" value="XM_047432968.1"/>
</dbReference>
<dbReference type="RefSeq" id="XP_054234641.1">
    <molecule id="O43278-2"/>
    <property type="nucleotide sequence ID" value="XM_054378666.1"/>
</dbReference>
<dbReference type="PDB" id="1YC0">
    <property type="method" value="X-ray"/>
    <property type="resolution" value="2.60 A"/>
    <property type="chains" value="I=245-303"/>
</dbReference>
<dbReference type="PDB" id="2MSX">
    <property type="method" value="NMR"/>
    <property type="chains" value="A=47-152"/>
</dbReference>
<dbReference type="PDB" id="4ISL">
    <property type="method" value="X-ray"/>
    <property type="resolution" value="2.29 A"/>
    <property type="chains" value="B=245-304"/>
</dbReference>
<dbReference type="PDB" id="4ISN">
    <property type="method" value="X-ray"/>
    <property type="resolution" value="2.45 A"/>
    <property type="chains" value="B=245-307"/>
</dbReference>
<dbReference type="PDB" id="4ISO">
    <property type="method" value="X-ray"/>
    <property type="resolution" value="2.01 A"/>
    <property type="chains" value="B=245-304"/>
</dbReference>
<dbReference type="PDB" id="5EZD">
    <property type="method" value="X-ray"/>
    <property type="resolution" value="2.10 A"/>
    <property type="chains" value="A/B=168-303"/>
</dbReference>
<dbReference type="PDB" id="5H7V">
    <property type="method" value="X-ray"/>
    <property type="resolution" value="3.82 A"/>
    <property type="chains" value="A=36-457"/>
</dbReference>
<dbReference type="PDBsum" id="1YC0"/>
<dbReference type="PDBsum" id="2MSX"/>
<dbReference type="PDBsum" id="4ISL"/>
<dbReference type="PDBsum" id="4ISN"/>
<dbReference type="PDBsum" id="4ISO"/>
<dbReference type="PDBsum" id="5EZD"/>
<dbReference type="PDBsum" id="5H7V"/>
<dbReference type="BMRB" id="O43278"/>
<dbReference type="SMR" id="O43278"/>
<dbReference type="BioGRID" id="112570">
    <property type="interactions" value="129"/>
</dbReference>
<dbReference type="DIP" id="DIP-37949N"/>
<dbReference type="FunCoup" id="O43278">
    <property type="interactions" value="226"/>
</dbReference>
<dbReference type="IntAct" id="O43278">
    <property type="interactions" value="49"/>
</dbReference>
<dbReference type="MINT" id="O43278"/>
<dbReference type="STRING" id="9606.ENSP00000342098"/>
<dbReference type="MEROPS" id="I02.007"/>
<dbReference type="MEROPS" id="I02.008"/>
<dbReference type="TCDB" id="8.B.13.1.5">
    <property type="family name" value="the kunitz-type serine protease inhibitor (hai) family"/>
</dbReference>
<dbReference type="GlyCosmos" id="O43278">
    <property type="glycosylation" value="6 sites, 1 glycan"/>
</dbReference>
<dbReference type="GlyGen" id="O43278">
    <property type="glycosylation" value="10 sites, 2 O-linked glycans (6 sites)"/>
</dbReference>
<dbReference type="iPTMnet" id="O43278"/>
<dbReference type="PhosphoSitePlus" id="O43278"/>
<dbReference type="SwissPalm" id="O43278"/>
<dbReference type="BioMuta" id="SPINT1"/>
<dbReference type="jPOST" id="O43278"/>
<dbReference type="MassIVE" id="O43278"/>
<dbReference type="PaxDb" id="9606-ENSP00000342098"/>
<dbReference type="PeptideAtlas" id="O43278"/>
<dbReference type="PRIDE" id="O43278"/>
<dbReference type="ProteomicsDB" id="48846">
    <molecule id="O43278-1"/>
</dbReference>
<dbReference type="ProteomicsDB" id="48847">
    <molecule id="O43278-2"/>
</dbReference>
<dbReference type="Pumba" id="O43278"/>
<dbReference type="Antibodypedia" id="1540">
    <property type="antibodies" value="461 antibodies from 33 providers"/>
</dbReference>
<dbReference type="DNASU" id="6692"/>
<dbReference type="Ensembl" id="ENST00000344051.8">
    <molecule id="O43278-1"/>
    <property type="protein sequence ID" value="ENSP00000342098.4"/>
    <property type="gene ID" value="ENSG00000166145.15"/>
</dbReference>
<dbReference type="Ensembl" id="ENST00000562057.6">
    <molecule id="O43278-2"/>
    <property type="protein sequence ID" value="ENSP00000457076.1"/>
    <property type="gene ID" value="ENSG00000166145.15"/>
</dbReference>
<dbReference type="GeneID" id="6692"/>
<dbReference type="KEGG" id="hsa:6692"/>
<dbReference type="MANE-Select" id="ENST00000562057.6">
    <molecule id="O43278-2"/>
    <property type="protein sequence ID" value="ENSP00000457076.1"/>
    <property type="RefSeq nucleotide sequence ID" value="NM_003710.4"/>
    <property type="RefSeq protein sequence ID" value="NP_003701.1"/>
</dbReference>
<dbReference type="UCSC" id="uc001zna.4">
    <molecule id="O43278-1"/>
    <property type="organism name" value="human"/>
</dbReference>
<dbReference type="AGR" id="HGNC:11246"/>
<dbReference type="CTD" id="6692"/>
<dbReference type="DisGeNET" id="6692"/>
<dbReference type="GeneCards" id="SPINT1"/>
<dbReference type="HGNC" id="HGNC:11246">
    <property type="gene designation" value="SPINT1"/>
</dbReference>
<dbReference type="HPA" id="ENSG00000166145">
    <property type="expression patterns" value="Tissue enhanced (esophagus)"/>
</dbReference>
<dbReference type="MIM" id="605123">
    <property type="type" value="gene"/>
</dbReference>
<dbReference type="neXtProt" id="NX_O43278"/>
<dbReference type="OpenTargets" id="ENSG00000166145"/>
<dbReference type="PharmGKB" id="PA36076"/>
<dbReference type="VEuPathDB" id="HostDB:ENSG00000166145"/>
<dbReference type="eggNOG" id="KOG4295">
    <property type="taxonomic scope" value="Eukaryota"/>
</dbReference>
<dbReference type="GeneTree" id="ENSGT00940000161683"/>
<dbReference type="InParanoid" id="O43278"/>
<dbReference type="OMA" id="KGFHRHH"/>
<dbReference type="OrthoDB" id="2019384at2759"/>
<dbReference type="PAN-GO" id="O43278">
    <property type="GO annotations" value="5 GO annotations based on evolutionary models"/>
</dbReference>
<dbReference type="PhylomeDB" id="O43278"/>
<dbReference type="TreeFam" id="TF325867"/>
<dbReference type="PathwayCommons" id="O43278"/>
<dbReference type="Reactome" id="R-HSA-6806942">
    <property type="pathway name" value="MET Receptor Activation"/>
</dbReference>
<dbReference type="Reactome" id="R-HSA-8852405">
    <property type="pathway name" value="Signaling by MST1"/>
</dbReference>
<dbReference type="SignaLink" id="O43278"/>
<dbReference type="BioGRID-ORCS" id="6692">
    <property type="hits" value="33 hits in 1165 CRISPR screens"/>
</dbReference>
<dbReference type="ChiTaRS" id="SPINT1">
    <property type="organism name" value="human"/>
</dbReference>
<dbReference type="EvolutionaryTrace" id="O43278"/>
<dbReference type="GeneWiki" id="SPINT1"/>
<dbReference type="GenomeRNAi" id="6692"/>
<dbReference type="Pharos" id="O43278">
    <property type="development level" value="Tbio"/>
</dbReference>
<dbReference type="PRO" id="PR:O43278"/>
<dbReference type="Proteomes" id="UP000005640">
    <property type="component" value="Chromosome 15"/>
</dbReference>
<dbReference type="RNAct" id="O43278">
    <property type="molecule type" value="protein"/>
</dbReference>
<dbReference type="Bgee" id="ENSG00000166145">
    <property type="expression patterns" value="Expressed in lower esophagus mucosa and 150 other cell types or tissues"/>
</dbReference>
<dbReference type="ExpressionAtlas" id="O43278">
    <property type="expression patterns" value="baseline and differential"/>
</dbReference>
<dbReference type="GO" id="GO:0005737">
    <property type="term" value="C:cytoplasm"/>
    <property type="evidence" value="ECO:0007669"/>
    <property type="project" value="UniProtKB-SubCell"/>
</dbReference>
<dbReference type="GO" id="GO:0070062">
    <property type="term" value="C:extracellular exosome"/>
    <property type="evidence" value="ECO:0007005"/>
    <property type="project" value="UniProtKB"/>
</dbReference>
<dbReference type="GO" id="GO:0005576">
    <property type="term" value="C:extracellular region"/>
    <property type="evidence" value="ECO:0000304"/>
    <property type="project" value="ProtInc"/>
</dbReference>
<dbReference type="GO" id="GO:0005615">
    <property type="term" value="C:extracellular space"/>
    <property type="evidence" value="ECO:0007005"/>
    <property type="project" value="UniProtKB"/>
</dbReference>
<dbReference type="GO" id="GO:0016020">
    <property type="term" value="C:membrane"/>
    <property type="evidence" value="ECO:0000304"/>
    <property type="project" value="ProtInc"/>
</dbReference>
<dbReference type="GO" id="GO:0005886">
    <property type="term" value="C:plasma membrane"/>
    <property type="evidence" value="ECO:0000318"/>
    <property type="project" value="GO_Central"/>
</dbReference>
<dbReference type="GO" id="GO:0004867">
    <property type="term" value="F:serine-type endopeptidase inhibitor activity"/>
    <property type="evidence" value="ECO:0000318"/>
    <property type="project" value="GO_Central"/>
</dbReference>
<dbReference type="GO" id="GO:0060670">
    <property type="term" value="P:branching involved in labyrinthine layer morphogenesis"/>
    <property type="evidence" value="ECO:0007669"/>
    <property type="project" value="Ensembl"/>
</dbReference>
<dbReference type="GO" id="GO:0071773">
    <property type="term" value="P:cellular response to BMP stimulus"/>
    <property type="evidence" value="ECO:0007669"/>
    <property type="project" value="Ensembl"/>
</dbReference>
<dbReference type="GO" id="GO:0008544">
    <property type="term" value="P:epidermis development"/>
    <property type="evidence" value="ECO:0000318"/>
    <property type="project" value="GO_Central"/>
</dbReference>
<dbReference type="GO" id="GO:0060429">
    <property type="term" value="P:epithelium development"/>
    <property type="evidence" value="ECO:0000318"/>
    <property type="project" value="GO_Central"/>
</dbReference>
<dbReference type="GO" id="GO:0030198">
    <property type="term" value="P:extracellular matrix organization"/>
    <property type="evidence" value="ECO:0000318"/>
    <property type="project" value="GO_Central"/>
</dbReference>
<dbReference type="GO" id="GO:2000178">
    <property type="term" value="P:negative regulation of neural precursor cell proliferation"/>
    <property type="evidence" value="ECO:0007669"/>
    <property type="project" value="Ensembl"/>
</dbReference>
<dbReference type="GO" id="GO:0001843">
    <property type="term" value="P:neural tube closure"/>
    <property type="evidence" value="ECO:0007669"/>
    <property type="project" value="Ensembl"/>
</dbReference>
<dbReference type="GO" id="GO:0060674">
    <property type="term" value="P:placenta blood vessel development"/>
    <property type="evidence" value="ECO:0007669"/>
    <property type="project" value="Ensembl"/>
</dbReference>
<dbReference type="GO" id="GO:0045687">
    <property type="term" value="P:positive regulation of glial cell differentiation"/>
    <property type="evidence" value="ECO:0007669"/>
    <property type="project" value="Ensembl"/>
</dbReference>
<dbReference type="CDD" id="cd22623">
    <property type="entry name" value="Kunitz_HAI1_1-like"/>
    <property type="match status" value="1"/>
</dbReference>
<dbReference type="CDD" id="cd22624">
    <property type="entry name" value="Kunitz_HAI1_2-like"/>
    <property type="match status" value="1"/>
</dbReference>
<dbReference type="CDD" id="cd00112">
    <property type="entry name" value="LDLa"/>
    <property type="match status" value="1"/>
</dbReference>
<dbReference type="FunFam" id="4.10.400.10:FF:000067">
    <property type="entry name" value="Serine peptidase inhibitor, Kunitz type 1"/>
    <property type="match status" value="1"/>
</dbReference>
<dbReference type="FunFam" id="4.10.410.10:FF:000006">
    <property type="entry name" value="Serine peptidase inhibitor, Kunitz type 1"/>
    <property type="match status" value="1"/>
</dbReference>
<dbReference type="FunFam" id="4.10.410.10:FF:000008">
    <property type="entry name" value="Serine peptidase inhibitor, Kunitz type 1"/>
    <property type="match status" value="1"/>
</dbReference>
<dbReference type="Gene3D" id="2.60.40.10">
    <property type="entry name" value="Immunoglobulins"/>
    <property type="match status" value="1"/>
</dbReference>
<dbReference type="Gene3D" id="4.10.400.10">
    <property type="entry name" value="Low-density Lipoprotein Receptor"/>
    <property type="match status" value="1"/>
</dbReference>
<dbReference type="Gene3D" id="4.10.410.10">
    <property type="entry name" value="Pancreatic trypsin inhibitor Kunitz domain"/>
    <property type="match status" value="2"/>
</dbReference>
<dbReference type="InterPro" id="IPR013783">
    <property type="entry name" value="Ig-like_fold"/>
</dbReference>
<dbReference type="InterPro" id="IPR002223">
    <property type="entry name" value="Kunitz_BPTI"/>
</dbReference>
<dbReference type="InterPro" id="IPR036880">
    <property type="entry name" value="Kunitz_BPTI_sf"/>
</dbReference>
<dbReference type="InterPro" id="IPR036055">
    <property type="entry name" value="LDL_receptor-like_sf"/>
</dbReference>
<dbReference type="InterPro" id="IPR023415">
    <property type="entry name" value="LDLR_class-A_CS"/>
</dbReference>
<dbReference type="InterPro" id="IPR002172">
    <property type="entry name" value="LDrepeatLR_classA_rpt"/>
</dbReference>
<dbReference type="InterPro" id="IPR013980">
    <property type="entry name" value="MANSC_dom"/>
</dbReference>
<dbReference type="InterPro" id="IPR011106">
    <property type="entry name" value="MANSC_N"/>
</dbReference>
<dbReference type="InterPro" id="IPR020901">
    <property type="entry name" value="Prtase_inh_Kunz-CS"/>
</dbReference>
<dbReference type="PANTHER" id="PTHR46750">
    <property type="entry name" value="KUNITZ-TYPE PROTEASE INHIBITOR 1"/>
    <property type="match status" value="1"/>
</dbReference>
<dbReference type="PANTHER" id="PTHR46750:SF1">
    <property type="entry name" value="KUNITZ-TYPE PROTEASE INHIBITOR 1"/>
    <property type="match status" value="1"/>
</dbReference>
<dbReference type="Pfam" id="PF22352">
    <property type="entry name" value="K319L-like_PKD"/>
    <property type="match status" value="1"/>
</dbReference>
<dbReference type="Pfam" id="PF00014">
    <property type="entry name" value="Kunitz_BPTI"/>
    <property type="match status" value="2"/>
</dbReference>
<dbReference type="Pfam" id="PF00057">
    <property type="entry name" value="Ldl_recept_a"/>
    <property type="match status" value="1"/>
</dbReference>
<dbReference type="Pfam" id="PF07502">
    <property type="entry name" value="MANEC"/>
    <property type="match status" value="1"/>
</dbReference>
<dbReference type="PRINTS" id="PR00759">
    <property type="entry name" value="BASICPTASE"/>
</dbReference>
<dbReference type="SMART" id="SM00131">
    <property type="entry name" value="KU"/>
    <property type="match status" value="2"/>
</dbReference>
<dbReference type="SMART" id="SM00192">
    <property type="entry name" value="LDLa"/>
    <property type="match status" value="1"/>
</dbReference>
<dbReference type="SMART" id="SM00765">
    <property type="entry name" value="MANEC"/>
    <property type="match status" value="1"/>
</dbReference>
<dbReference type="SUPFAM" id="SSF57362">
    <property type="entry name" value="BPTI-like"/>
    <property type="match status" value="2"/>
</dbReference>
<dbReference type="SUPFAM" id="SSF57424">
    <property type="entry name" value="LDL receptor-like module"/>
    <property type="match status" value="1"/>
</dbReference>
<dbReference type="PROSITE" id="PS00280">
    <property type="entry name" value="BPTI_KUNITZ_1"/>
    <property type="match status" value="2"/>
</dbReference>
<dbReference type="PROSITE" id="PS50279">
    <property type="entry name" value="BPTI_KUNITZ_2"/>
    <property type="match status" value="2"/>
</dbReference>
<dbReference type="PROSITE" id="PS01209">
    <property type="entry name" value="LDLRA_1"/>
    <property type="match status" value="1"/>
</dbReference>
<dbReference type="PROSITE" id="PS50068">
    <property type="entry name" value="LDLRA_2"/>
    <property type="match status" value="1"/>
</dbReference>
<dbReference type="PROSITE" id="PS50986">
    <property type="entry name" value="MANSC"/>
    <property type="match status" value="1"/>
</dbReference>
<protein>
    <recommendedName>
        <fullName>Kunitz-type protease inhibitor 1</fullName>
    </recommendedName>
    <alternativeName>
        <fullName>Hepatocyte growth factor activator inhibitor type 1</fullName>
        <shortName>HAI-1</shortName>
    </alternativeName>
</protein>
<organism>
    <name type="scientific">Homo sapiens</name>
    <name type="common">Human</name>
    <dbReference type="NCBI Taxonomy" id="9606"/>
    <lineage>
        <taxon>Eukaryota</taxon>
        <taxon>Metazoa</taxon>
        <taxon>Chordata</taxon>
        <taxon>Craniata</taxon>
        <taxon>Vertebrata</taxon>
        <taxon>Euteleostomi</taxon>
        <taxon>Mammalia</taxon>
        <taxon>Eutheria</taxon>
        <taxon>Euarchontoglires</taxon>
        <taxon>Primates</taxon>
        <taxon>Haplorrhini</taxon>
        <taxon>Catarrhini</taxon>
        <taxon>Hominidae</taxon>
        <taxon>Homo</taxon>
    </lineage>
</organism>
<accession>O43278</accession>
<accession>Q7Z7D2</accession>
<gene>
    <name type="primary">SPINT1</name>
    <name type="synonym">HAI1</name>
    <name type="ORF">UNQ223/PRO256</name>
</gene>
<keyword id="KW-0002">3D-structure</keyword>
<keyword id="KW-0025">Alternative splicing</keyword>
<keyword id="KW-1003">Cell membrane</keyword>
<keyword id="KW-0963">Cytoplasm</keyword>
<keyword id="KW-0903">Direct protein sequencing</keyword>
<keyword id="KW-1015">Disulfide bond</keyword>
<keyword id="KW-0325">Glycoprotein</keyword>
<keyword id="KW-0472">Membrane</keyword>
<keyword id="KW-0646">Protease inhibitor</keyword>
<keyword id="KW-1267">Proteomics identification</keyword>
<keyword id="KW-1185">Reference proteome</keyword>
<keyword id="KW-0677">Repeat</keyword>
<keyword id="KW-0964">Secreted</keyword>
<keyword id="KW-0722">Serine protease inhibitor</keyword>
<keyword id="KW-0732">Signal</keyword>
<name>SPIT1_HUMAN</name>
<reference key="1">
    <citation type="journal article" date="1997" name="J. Biol. Chem.">
        <title>Hepatocyte growth factor activator inhibitor, a novel Kunitz-type serine protease inhibitor.</title>
        <authorList>
            <person name="Shimomura T."/>
            <person name="Denda K."/>
            <person name="Kitamura A."/>
            <person name="Kawaguchi T."/>
            <person name="Kito M."/>
            <person name="Kondo J."/>
            <person name="Kagaya S."/>
            <person name="Qin L."/>
            <person name="Takata H."/>
            <person name="Miyazawa K."/>
            <person name="Kitamura N."/>
        </authorList>
    </citation>
    <scope>NUCLEOTIDE SEQUENCE [MRNA] (ISOFORM 2)</scope>
    <scope>FUNCTION</scope>
    <scope>SUBCELLULAR LOCATION</scope>
</reference>
<reference key="2">
    <citation type="submission" date="2003-06" db="EMBL/GenBank/DDBJ databases">
        <title>Tissue-expression, protease-specificity and Kunitz domain functions of HAI-1B, a new splice variant of hepatocyte growth factor activator inhibitor-1.</title>
        <authorList>
            <person name="Kirchhofer D."/>
            <person name="Peek M."/>
            <person name="Li W."/>
            <person name="Stamos J."/>
            <person name="Eigenbrot C."/>
            <person name="Kadkhodayan S."/>
            <person name="Eliott J.M."/>
            <person name="Corpuz R.T."/>
            <person name="Lazarus R.A."/>
            <person name="Moran P."/>
        </authorList>
    </citation>
    <scope>NUCLEOTIDE SEQUENCE [MRNA] (ISOFORM 1)</scope>
</reference>
<reference key="3">
    <citation type="journal article" date="2003" name="Genome Res.">
        <title>The secreted protein discovery initiative (SPDI), a large-scale effort to identify novel human secreted and transmembrane proteins: a bioinformatics assessment.</title>
        <authorList>
            <person name="Clark H.F."/>
            <person name="Gurney A.L."/>
            <person name="Abaya E."/>
            <person name="Baker K."/>
            <person name="Baldwin D.T."/>
            <person name="Brush J."/>
            <person name="Chen J."/>
            <person name="Chow B."/>
            <person name="Chui C."/>
            <person name="Crowley C."/>
            <person name="Currell B."/>
            <person name="Deuel B."/>
            <person name="Dowd P."/>
            <person name="Eaton D."/>
            <person name="Foster J.S."/>
            <person name="Grimaldi C."/>
            <person name="Gu Q."/>
            <person name="Hass P.E."/>
            <person name="Heldens S."/>
            <person name="Huang A."/>
            <person name="Kim H.S."/>
            <person name="Klimowski L."/>
            <person name="Jin Y."/>
            <person name="Johnson S."/>
            <person name="Lee J."/>
            <person name="Lewis L."/>
            <person name="Liao D."/>
            <person name="Mark M.R."/>
            <person name="Robbie E."/>
            <person name="Sanchez C."/>
            <person name="Schoenfeld J."/>
            <person name="Seshagiri S."/>
            <person name="Simmons L."/>
            <person name="Singh J."/>
            <person name="Smith V."/>
            <person name="Stinson J."/>
            <person name="Vagts A."/>
            <person name="Vandlen R.L."/>
            <person name="Watanabe C."/>
            <person name="Wieand D."/>
            <person name="Woods K."/>
            <person name="Xie M.-H."/>
            <person name="Yansura D.G."/>
            <person name="Yi S."/>
            <person name="Yu G."/>
            <person name="Yuan J."/>
            <person name="Zhang M."/>
            <person name="Zhang Z."/>
            <person name="Goddard A.D."/>
            <person name="Wood W.I."/>
            <person name="Godowski P.J."/>
            <person name="Gray A.M."/>
        </authorList>
    </citation>
    <scope>NUCLEOTIDE SEQUENCE [LARGE SCALE MRNA] (ISOFORM 1)</scope>
</reference>
<reference key="4">
    <citation type="submission" date="2003-05" db="EMBL/GenBank/DDBJ databases">
        <title>Cloning of human full-length CDSs in BD Creator(TM) system donor vector.</title>
        <authorList>
            <person name="Kalnine N."/>
            <person name="Chen X."/>
            <person name="Rolfs A."/>
            <person name="Halleck A."/>
            <person name="Hines L."/>
            <person name="Eisenstein S."/>
            <person name="Koundinya M."/>
            <person name="Raphael J."/>
            <person name="Moreira D."/>
            <person name="Kelley T."/>
            <person name="LaBaer J."/>
            <person name="Lin Y."/>
            <person name="Phelan M."/>
            <person name="Farmer A."/>
        </authorList>
    </citation>
    <scope>NUCLEOTIDE SEQUENCE [LARGE SCALE MRNA] (ISOFORM 1)</scope>
</reference>
<reference key="5">
    <citation type="journal article" date="2004" name="Genome Res.">
        <title>The status, quality, and expansion of the NIH full-length cDNA project: the Mammalian Gene Collection (MGC).</title>
        <authorList>
            <consortium name="The MGC Project Team"/>
        </authorList>
    </citation>
    <scope>NUCLEOTIDE SEQUENCE [LARGE SCALE MRNA] (ISOFORM 2)</scope>
    <source>
        <tissue>Colon</tissue>
        <tissue>Placenta</tissue>
    </source>
</reference>
<reference key="6">
    <citation type="journal article" date="1999" name="J. Biol. Chem.">
        <title>Purification and characterization of a complex containing matriptase and a Kunitz-type serine protease inhibitor from human milk.</title>
        <authorList>
            <person name="Lin C.Y."/>
            <person name="Anders J."/>
            <person name="Johnson M."/>
            <person name="Dickson R.B."/>
        </authorList>
    </citation>
    <scope>PARTIAL PROTEIN SEQUENCE</scope>
    <scope>CHARACTERIZATION</scope>
    <source>
        <tissue>Milk</tissue>
    </source>
</reference>
<reference key="7">
    <citation type="journal article" date="2004" name="Protein Sci.">
        <title>Signal peptide prediction based on analysis of experimentally verified cleavage sites.</title>
        <authorList>
            <person name="Zhang Z."/>
            <person name="Henzel W.J."/>
        </authorList>
    </citation>
    <scope>PROTEIN SEQUENCE OF 36-50</scope>
</reference>
<reference key="8">
    <citation type="journal article" date="2008" name="Proc. Natl. Acad. Sci. U.S.A.">
        <title>A quantitative atlas of mitotic phosphorylation.</title>
        <authorList>
            <person name="Dephoure N."/>
            <person name="Zhou C."/>
            <person name="Villen J."/>
            <person name="Beausoleil S.A."/>
            <person name="Bakalarski C.E."/>
            <person name="Elledge S.J."/>
            <person name="Gygi S.P."/>
        </authorList>
    </citation>
    <scope>IDENTIFICATION BY MASS SPECTROMETRY [LARGE SCALE ANALYSIS]</scope>
    <source>
        <tissue>Cervix carcinoma</tissue>
    </source>
</reference>
<reference key="9">
    <citation type="journal article" date="2010" name="FEBS J.">
        <title>TMPRSS13, a type II transmembrane serine protease, is inhibited by hepatocyte growth factor activator inhibitor type 1 and activates pro-hepatocyte growth factor.</title>
        <authorList>
            <person name="Hashimoto T."/>
            <person name="Kato M."/>
            <person name="Shimomura T."/>
            <person name="Kitamura N."/>
        </authorList>
    </citation>
    <scope>FUNCTION</scope>
</reference>
<reference key="10">
    <citation type="journal article" date="2017" name="J. Biol. Chem.">
        <title>Phosphorylation of the type II transmembrane serine protease, TMPRSS13, in hepatocyte growth factor activator inhibitor-1 and -2-mediated cell-surface localization.</title>
        <authorList>
            <person name="Murray A.S."/>
            <person name="Varela F.A."/>
            <person name="Hyland T.E."/>
            <person name="Schoenbeck A.J."/>
            <person name="White J.M."/>
            <person name="Tanabe L.M."/>
            <person name="Todi S.V."/>
            <person name="List K."/>
        </authorList>
    </citation>
    <scope>FUNCTION</scope>
    <scope>INTERACTION WITH TMPRSS13</scope>
    <scope>SUBCELLULAR LOCATION</scope>
</reference>
<reference key="11">
    <citation type="journal article" date="2005" name="J. Mol. Biol.">
        <title>Conformational lability in serine protease active sites: structures of hepatocyte growth factor activator (HGFA) alone and with the inhibitory domain from HGFA inhibitor-1B.</title>
        <authorList>
            <person name="Shia S."/>
            <person name="Stamos J."/>
            <person name="Kirchhofer D."/>
            <person name="Fan B."/>
            <person name="Wu J."/>
            <person name="Corpuz R.T."/>
            <person name="Santell L."/>
            <person name="Lazarus R.A."/>
            <person name="Eigenbrot C."/>
        </authorList>
    </citation>
    <scope>X-RAY CRYSTALLOGRAPHY (2.6 ANGSTROMS) OF 245-303 IN COMPLEX WITH HGFAC</scope>
    <scope>DISULFIDE BONDS</scope>
</reference>
<feature type="signal peptide" evidence="6">
    <location>
        <begin position="1"/>
        <end position="35"/>
    </location>
</feature>
<feature type="chain" id="PRO_0000016883" description="Kunitz-type protease inhibitor 1">
    <location>
        <begin position="36"/>
        <end position="529"/>
    </location>
</feature>
<feature type="domain" description="MANSC" evidence="5">
    <location>
        <begin position="57"/>
        <end position="140"/>
    </location>
</feature>
<feature type="domain" description="BPTI/Kunitz inhibitor 1" evidence="3">
    <location>
        <begin position="250"/>
        <end position="300"/>
    </location>
</feature>
<feature type="domain" description="LDL-receptor class A" evidence="4">
    <location>
        <begin position="334"/>
        <end position="370"/>
    </location>
</feature>
<feature type="domain" description="BPTI/Kunitz inhibitor 2" evidence="3">
    <location>
        <begin position="391"/>
        <end position="441"/>
    </location>
</feature>
<feature type="site" description="Reactive bond" evidence="1">
    <location>
        <begin position="260"/>
        <end position="261"/>
    </location>
</feature>
<feature type="site" description="Reactive bond" evidence="1">
    <location>
        <begin position="401"/>
        <end position="402"/>
    </location>
</feature>
<feature type="glycosylation site" description="N-linked (GlcNAc...) asparagine" evidence="2">
    <location>
        <position position="66"/>
    </location>
</feature>
<feature type="glycosylation site" description="N-linked (GlcNAc...) asparagine" evidence="2">
    <location>
        <position position="235"/>
    </location>
</feature>
<feature type="glycosylation site" description="N-linked (GlcNAc...) asparagine" evidence="2">
    <location>
        <position position="523"/>
    </location>
</feature>
<feature type="disulfide bond" evidence="7">
    <location>
        <begin position="250"/>
        <end position="300"/>
    </location>
</feature>
<feature type="disulfide bond" evidence="7">
    <location>
        <begin position="259"/>
        <end position="283"/>
    </location>
</feature>
<feature type="disulfide bond" evidence="7">
    <location>
        <begin position="275"/>
        <end position="296"/>
    </location>
</feature>
<feature type="disulfide bond" evidence="4">
    <location>
        <begin position="335"/>
        <end position="347"/>
    </location>
</feature>
<feature type="disulfide bond" evidence="4">
    <location>
        <begin position="342"/>
        <end position="360"/>
    </location>
</feature>
<feature type="disulfide bond" evidence="4">
    <location>
        <begin position="354"/>
        <end position="369"/>
    </location>
</feature>
<feature type="disulfide bond" evidence="3">
    <location>
        <begin position="391"/>
        <end position="441"/>
    </location>
</feature>
<feature type="disulfide bond" evidence="3">
    <location>
        <begin position="400"/>
        <end position="424"/>
    </location>
</feature>
<feature type="disulfide bond" evidence="3">
    <location>
        <begin position="416"/>
        <end position="437"/>
    </location>
</feature>
<feature type="splice variant" id="VSP_013019" description="In isoform 2." evidence="11 12">
    <location>
        <begin position="306"/>
        <end position="321"/>
    </location>
</feature>
<feature type="sequence variant" id="VAR_050065" description="In dbSNP:rs11549915.">
    <original>Y</original>
    <variation>C</variation>
    <location>
        <position position="123"/>
    </location>
</feature>
<feature type="sequence variant" id="VAR_050066" description="In dbSNP:rs12323939.">
    <original>T</original>
    <variation>R</variation>
    <location>
        <position position="142"/>
    </location>
</feature>
<feature type="sequence variant" id="VAR_050067" description="In dbSNP:rs7165897.">
    <original>P</original>
    <variation>L</variation>
    <location>
        <position position="337"/>
    </location>
</feature>
<feature type="sequence conflict" description="In Ref. 2 and 3." evidence="13" ref="2 3">
    <original>A</original>
    <variation>T</variation>
    <location>
        <position position="469"/>
    </location>
</feature>
<feature type="helix" evidence="14">
    <location>
        <begin position="50"/>
        <end position="53"/>
    </location>
</feature>
<feature type="strand" evidence="14">
    <location>
        <begin position="54"/>
        <end position="56"/>
    </location>
</feature>
<feature type="strand" evidence="14">
    <location>
        <begin position="61"/>
        <end position="63"/>
    </location>
</feature>
<feature type="helix" evidence="14">
    <location>
        <begin position="66"/>
        <end position="69"/>
    </location>
</feature>
<feature type="turn" evidence="14">
    <location>
        <begin position="70"/>
        <end position="72"/>
    </location>
</feature>
<feature type="strand" evidence="14">
    <location>
        <begin position="75"/>
        <end position="77"/>
    </location>
</feature>
<feature type="helix" evidence="14">
    <location>
        <begin position="84"/>
        <end position="93"/>
    </location>
</feature>
<feature type="strand" evidence="14">
    <location>
        <begin position="99"/>
        <end position="104"/>
    </location>
</feature>
<feature type="strand" evidence="14">
    <location>
        <begin position="106"/>
        <end position="108"/>
    </location>
</feature>
<feature type="strand" evidence="14">
    <location>
        <begin position="113"/>
        <end position="119"/>
    </location>
</feature>
<feature type="strand" evidence="14">
    <location>
        <begin position="131"/>
        <end position="133"/>
    </location>
</feature>
<feature type="strand" evidence="14">
    <location>
        <begin position="135"/>
        <end position="142"/>
    </location>
</feature>
<feature type="turn" evidence="14">
    <location>
        <begin position="143"/>
        <end position="145"/>
    </location>
</feature>
<feature type="helix" evidence="14">
    <location>
        <begin position="146"/>
        <end position="149"/>
    </location>
</feature>
<feature type="turn" evidence="14">
    <location>
        <begin position="150"/>
        <end position="152"/>
    </location>
</feature>
<feature type="strand" evidence="16">
    <location>
        <begin position="169"/>
        <end position="173"/>
    </location>
</feature>
<feature type="strand" evidence="16">
    <location>
        <begin position="177"/>
        <end position="180"/>
    </location>
</feature>
<feature type="strand" evidence="16">
    <location>
        <begin position="190"/>
        <end position="196"/>
    </location>
</feature>
<feature type="strand" evidence="16">
    <location>
        <begin position="199"/>
        <end position="201"/>
    </location>
</feature>
<feature type="strand" evidence="16">
    <location>
        <begin position="209"/>
        <end position="212"/>
    </location>
</feature>
<feature type="strand" evidence="16">
    <location>
        <begin position="215"/>
        <end position="222"/>
    </location>
</feature>
<feature type="strand" evidence="16">
    <location>
        <begin position="234"/>
        <end position="240"/>
    </location>
</feature>
<feature type="helix" evidence="15">
    <location>
        <begin position="246"/>
        <end position="250"/>
    </location>
</feature>
<feature type="strand" evidence="15">
    <location>
        <begin position="263"/>
        <end position="268"/>
    </location>
</feature>
<feature type="turn" evidence="15">
    <location>
        <begin position="270"/>
        <end position="272"/>
    </location>
</feature>
<feature type="strand" evidence="15">
    <location>
        <begin position="273"/>
        <end position="280"/>
    </location>
</feature>
<feature type="strand" evidence="15">
    <location>
        <begin position="282"/>
        <end position="284"/>
    </location>
</feature>
<feature type="strand" evidence="15">
    <location>
        <begin position="290"/>
        <end position="292"/>
    </location>
</feature>
<feature type="helix" evidence="15">
    <location>
        <begin position="293"/>
        <end position="300"/>
    </location>
</feature>
<evidence type="ECO:0000250" key="1"/>
<evidence type="ECO:0000255" key="2"/>
<evidence type="ECO:0000255" key="3">
    <source>
        <dbReference type="PROSITE-ProRule" id="PRU00031"/>
    </source>
</evidence>
<evidence type="ECO:0000255" key="4">
    <source>
        <dbReference type="PROSITE-ProRule" id="PRU00124"/>
    </source>
</evidence>
<evidence type="ECO:0000255" key="5">
    <source>
        <dbReference type="PROSITE-ProRule" id="PRU00341"/>
    </source>
</evidence>
<evidence type="ECO:0000269" key="6">
    <source>
    </source>
</evidence>
<evidence type="ECO:0000269" key="7">
    <source>
    </source>
</evidence>
<evidence type="ECO:0000269" key="8">
    <source>
    </source>
</evidence>
<evidence type="ECO:0000269" key="9">
    <source>
    </source>
</evidence>
<evidence type="ECO:0000269" key="10">
    <source>
    </source>
</evidence>
<evidence type="ECO:0000303" key="11">
    <source>
    </source>
</evidence>
<evidence type="ECO:0000303" key="12">
    <source>
    </source>
</evidence>
<evidence type="ECO:0000305" key="13"/>
<evidence type="ECO:0007829" key="14">
    <source>
        <dbReference type="PDB" id="2MSX"/>
    </source>
</evidence>
<evidence type="ECO:0007829" key="15">
    <source>
        <dbReference type="PDB" id="4ISO"/>
    </source>
</evidence>
<evidence type="ECO:0007829" key="16">
    <source>
        <dbReference type="PDB" id="5EZD"/>
    </source>
</evidence>